<sequence length="300" mass="32102">MVEIPAIDLRLAGGGGGAEETARLRDACARLGCFRVSGHGVPPGLQAEMKAAVRALFDLPDDAKRRNADIIPGSGYVPPGTANPLYEAFGLCDAAAPADVDAFCARLDAPPHVRETVKAYAERMHSLIVDVAGKVAASLGLHGASFQDWPCQFRMNRYNYTQDSVGSPGVQVHTDSGFLTVLQEDECVGGLEVLDPAAGEFVPVDPLPGSFVVNVGDVGQAWSNGRLHNVKHRVQCVAAVPRVSIAMFLLAPKDDTVSAPGELVDGEHPRRYREFKYDDYRRLRLSTGERAGEALARLAA</sequence>
<gene>
    <name type="primary">DAO</name>
    <name type="ordered locus">Os04g0475600</name>
    <name type="ordered locus">LOC_Os04g39980</name>
    <name type="ORF">OSJNBa0022H21.12</name>
</gene>
<organism>
    <name type="scientific">Oryza sativa subsp. japonica</name>
    <name type="common">Rice</name>
    <dbReference type="NCBI Taxonomy" id="39947"/>
    <lineage>
        <taxon>Eukaryota</taxon>
        <taxon>Viridiplantae</taxon>
        <taxon>Streptophyta</taxon>
        <taxon>Embryophyta</taxon>
        <taxon>Tracheophyta</taxon>
        <taxon>Spermatophyta</taxon>
        <taxon>Magnoliopsida</taxon>
        <taxon>Liliopsida</taxon>
        <taxon>Poales</taxon>
        <taxon>Poaceae</taxon>
        <taxon>BOP clade</taxon>
        <taxon>Oryzoideae</taxon>
        <taxon>Oryzeae</taxon>
        <taxon>Oryzinae</taxon>
        <taxon>Oryza</taxon>
        <taxon>Oryza sativa</taxon>
    </lineage>
</organism>
<dbReference type="EC" id="1.14.11.-"/>
<dbReference type="EMBL" id="AL731582">
    <property type="protein sequence ID" value="CAE05492.2"/>
    <property type="molecule type" value="Genomic_DNA"/>
</dbReference>
<dbReference type="EMBL" id="AP008210">
    <property type="protein sequence ID" value="BAF14989.1"/>
    <property type="molecule type" value="Genomic_DNA"/>
</dbReference>
<dbReference type="EMBL" id="AP014960">
    <property type="protein sequence ID" value="BAS89685.1"/>
    <property type="molecule type" value="Genomic_DNA"/>
</dbReference>
<dbReference type="EMBL" id="AK105400">
    <property type="protein sequence ID" value="BAG97226.1"/>
    <property type="molecule type" value="mRNA"/>
</dbReference>
<dbReference type="EMBL" id="AK121520">
    <property type="protein sequence ID" value="BAH00532.1"/>
    <property type="molecule type" value="mRNA"/>
</dbReference>
<dbReference type="RefSeq" id="XP_015633778.1">
    <property type="nucleotide sequence ID" value="XM_015778292.1"/>
</dbReference>
<dbReference type="PDB" id="6KUN">
    <property type="method" value="X-ray"/>
    <property type="resolution" value="2.00 A"/>
    <property type="chains" value="A/B=1-300"/>
</dbReference>
<dbReference type="PDBsum" id="6KUN"/>
<dbReference type="SMR" id="Q7XKU5"/>
<dbReference type="FunCoup" id="Q7XKU5">
    <property type="interactions" value="1734"/>
</dbReference>
<dbReference type="STRING" id="39947.Q7XKU5"/>
<dbReference type="PaxDb" id="39947-Q7XKU5"/>
<dbReference type="EnsemblPlants" id="Os04t0475600-01">
    <property type="protein sequence ID" value="Os04t0475600-01"/>
    <property type="gene ID" value="Os04g0475600"/>
</dbReference>
<dbReference type="Gramene" id="Os04t0475600-01">
    <property type="protein sequence ID" value="Os04t0475600-01"/>
    <property type="gene ID" value="Os04g0475600"/>
</dbReference>
<dbReference type="KEGG" id="dosa:Os04g0475600"/>
<dbReference type="eggNOG" id="KOG0143">
    <property type="taxonomic scope" value="Eukaryota"/>
</dbReference>
<dbReference type="HOGENOM" id="CLU_010119_3_2_1"/>
<dbReference type="InParanoid" id="Q7XKU5"/>
<dbReference type="OMA" id="LIHRVQC"/>
<dbReference type="OrthoDB" id="288590at2759"/>
<dbReference type="Proteomes" id="UP000000763">
    <property type="component" value="Chromosome 4"/>
</dbReference>
<dbReference type="Proteomes" id="UP000059680">
    <property type="component" value="Chromosome 4"/>
</dbReference>
<dbReference type="GO" id="GO:0016706">
    <property type="term" value="F:2-oxoglutarate-dependent dioxygenase activity"/>
    <property type="evidence" value="ECO:0000318"/>
    <property type="project" value="GO_Central"/>
</dbReference>
<dbReference type="GO" id="GO:0046872">
    <property type="term" value="F:metal ion binding"/>
    <property type="evidence" value="ECO:0007669"/>
    <property type="project" value="UniProtKB-KW"/>
</dbReference>
<dbReference type="GO" id="GO:0009852">
    <property type="term" value="P:auxin catabolic process"/>
    <property type="evidence" value="ECO:0000315"/>
    <property type="project" value="UniProtKB"/>
</dbReference>
<dbReference type="FunFam" id="2.60.120.330:FF:000017">
    <property type="entry name" value="2-oxoglutarate-dependent dioxygenase DAO"/>
    <property type="match status" value="1"/>
</dbReference>
<dbReference type="Gene3D" id="2.60.120.330">
    <property type="entry name" value="B-lactam Antibiotic, Isopenicillin N Synthase, Chain"/>
    <property type="match status" value="1"/>
</dbReference>
<dbReference type="InterPro" id="IPR026992">
    <property type="entry name" value="DIOX_N"/>
</dbReference>
<dbReference type="InterPro" id="IPR044861">
    <property type="entry name" value="IPNS-like_FE2OG_OXY"/>
</dbReference>
<dbReference type="InterPro" id="IPR027443">
    <property type="entry name" value="IPNS-like_sf"/>
</dbReference>
<dbReference type="InterPro" id="IPR050231">
    <property type="entry name" value="Iron_ascorbate_oxido_reductase"/>
</dbReference>
<dbReference type="InterPro" id="IPR005123">
    <property type="entry name" value="Oxoglu/Fe-dep_dioxygenase_dom"/>
</dbReference>
<dbReference type="PANTHER" id="PTHR47990">
    <property type="entry name" value="2-OXOGLUTARATE (2OG) AND FE(II)-DEPENDENT OXYGENASE SUPERFAMILY PROTEIN-RELATED"/>
    <property type="match status" value="1"/>
</dbReference>
<dbReference type="Pfam" id="PF03171">
    <property type="entry name" value="2OG-FeII_Oxy"/>
    <property type="match status" value="1"/>
</dbReference>
<dbReference type="Pfam" id="PF14226">
    <property type="entry name" value="DIOX_N"/>
    <property type="match status" value="1"/>
</dbReference>
<dbReference type="SUPFAM" id="SSF51197">
    <property type="entry name" value="Clavaminate synthase-like"/>
    <property type="match status" value="1"/>
</dbReference>
<dbReference type="PROSITE" id="PS51471">
    <property type="entry name" value="FE2OG_OXY"/>
    <property type="match status" value="1"/>
</dbReference>
<proteinExistence type="evidence at protein level"/>
<evidence type="ECO:0000255" key="1">
    <source>
        <dbReference type="PROSITE-ProRule" id="PRU00805"/>
    </source>
</evidence>
<evidence type="ECO:0000269" key="2">
    <source>
    </source>
</evidence>
<evidence type="ECO:0000305" key="3"/>
<keyword id="KW-0002">3D-structure</keyword>
<keyword id="KW-0223">Dioxygenase</keyword>
<keyword id="KW-0408">Iron</keyword>
<keyword id="KW-0479">Metal-binding</keyword>
<keyword id="KW-0560">Oxidoreductase</keyword>
<keyword id="KW-1185">Reference proteome</keyword>
<reference key="1">
    <citation type="journal article" date="2002" name="Nature">
        <title>Sequence and analysis of rice chromosome 4.</title>
        <authorList>
            <person name="Feng Q."/>
            <person name="Zhang Y."/>
            <person name="Hao P."/>
            <person name="Wang S."/>
            <person name="Fu G."/>
            <person name="Huang Y."/>
            <person name="Li Y."/>
            <person name="Zhu J."/>
            <person name="Liu Y."/>
            <person name="Hu X."/>
            <person name="Jia P."/>
            <person name="Zhang Y."/>
            <person name="Zhao Q."/>
            <person name="Ying K."/>
            <person name="Yu S."/>
            <person name="Tang Y."/>
            <person name="Weng Q."/>
            <person name="Zhang L."/>
            <person name="Lu Y."/>
            <person name="Mu J."/>
            <person name="Lu Y."/>
            <person name="Zhang L.S."/>
            <person name="Yu Z."/>
            <person name="Fan D."/>
            <person name="Liu X."/>
            <person name="Lu T."/>
            <person name="Li C."/>
            <person name="Wu Y."/>
            <person name="Sun T."/>
            <person name="Lei H."/>
            <person name="Li T."/>
            <person name="Hu H."/>
            <person name="Guan J."/>
            <person name="Wu M."/>
            <person name="Zhang R."/>
            <person name="Zhou B."/>
            <person name="Chen Z."/>
            <person name="Chen L."/>
            <person name="Jin Z."/>
            <person name="Wang R."/>
            <person name="Yin H."/>
            <person name="Cai Z."/>
            <person name="Ren S."/>
            <person name="Lv G."/>
            <person name="Gu W."/>
            <person name="Zhu G."/>
            <person name="Tu Y."/>
            <person name="Jia J."/>
            <person name="Zhang Y."/>
            <person name="Chen J."/>
            <person name="Kang H."/>
            <person name="Chen X."/>
            <person name="Shao C."/>
            <person name="Sun Y."/>
            <person name="Hu Q."/>
            <person name="Zhang X."/>
            <person name="Zhang W."/>
            <person name="Wang L."/>
            <person name="Ding C."/>
            <person name="Sheng H."/>
            <person name="Gu J."/>
            <person name="Chen S."/>
            <person name="Ni L."/>
            <person name="Zhu F."/>
            <person name="Chen W."/>
            <person name="Lan L."/>
            <person name="Lai Y."/>
            <person name="Cheng Z."/>
            <person name="Gu M."/>
            <person name="Jiang J."/>
            <person name="Li J."/>
            <person name="Hong G."/>
            <person name="Xue Y."/>
            <person name="Han B."/>
        </authorList>
    </citation>
    <scope>NUCLEOTIDE SEQUENCE [LARGE SCALE GENOMIC DNA]</scope>
    <source>
        <strain>cv. Nipponbare</strain>
    </source>
</reference>
<reference key="2">
    <citation type="journal article" date="2005" name="Nature">
        <title>The map-based sequence of the rice genome.</title>
        <authorList>
            <consortium name="International rice genome sequencing project (IRGSP)"/>
        </authorList>
    </citation>
    <scope>NUCLEOTIDE SEQUENCE [LARGE SCALE GENOMIC DNA]</scope>
    <source>
        <strain>cv. Nipponbare</strain>
    </source>
</reference>
<reference key="3">
    <citation type="journal article" date="2008" name="Nucleic Acids Res.">
        <title>The rice annotation project database (RAP-DB): 2008 update.</title>
        <authorList>
            <consortium name="The rice annotation project (RAP)"/>
        </authorList>
    </citation>
    <scope>GENOME REANNOTATION</scope>
    <source>
        <strain>cv. Nipponbare</strain>
    </source>
</reference>
<reference key="4">
    <citation type="journal article" date="2013" name="Rice">
        <title>Improvement of the Oryza sativa Nipponbare reference genome using next generation sequence and optical map data.</title>
        <authorList>
            <person name="Kawahara Y."/>
            <person name="de la Bastide M."/>
            <person name="Hamilton J.P."/>
            <person name="Kanamori H."/>
            <person name="McCombie W.R."/>
            <person name="Ouyang S."/>
            <person name="Schwartz D.C."/>
            <person name="Tanaka T."/>
            <person name="Wu J."/>
            <person name="Zhou S."/>
            <person name="Childs K.L."/>
            <person name="Davidson R.M."/>
            <person name="Lin H."/>
            <person name="Quesada-Ocampo L."/>
            <person name="Vaillancourt B."/>
            <person name="Sakai H."/>
            <person name="Lee S.S."/>
            <person name="Kim J."/>
            <person name="Numa H."/>
            <person name="Itoh T."/>
            <person name="Buell C.R."/>
            <person name="Matsumoto T."/>
        </authorList>
    </citation>
    <scope>GENOME REANNOTATION</scope>
    <source>
        <strain>cv. Nipponbare</strain>
    </source>
</reference>
<reference key="5">
    <citation type="journal article" date="2003" name="Science">
        <title>Collection, mapping, and annotation of over 28,000 cDNA clones from japonica rice.</title>
        <authorList>
            <consortium name="The rice full-length cDNA consortium"/>
        </authorList>
    </citation>
    <scope>NUCLEOTIDE SEQUENCE [LARGE SCALE MRNA]</scope>
    <source>
        <strain>cv. Nipponbare</strain>
    </source>
</reference>
<reference key="6">
    <citation type="journal article" date="2013" name="Dev. Cell">
        <title>A role for a dioxygenase in auxin metabolism and reproductive development in rice.</title>
        <authorList>
            <person name="Zhao Z."/>
            <person name="Zhang Y."/>
            <person name="Liu X."/>
            <person name="Zhang X."/>
            <person name="Liu S."/>
            <person name="Yu X."/>
            <person name="Ren Y."/>
            <person name="Zheng X."/>
            <person name="Zhou K."/>
            <person name="Jiang L."/>
            <person name="Guo X."/>
            <person name="Gai Y."/>
            <person name="Wu C."/>
            <person name="Zhai H."/>
            <person name="Wang H."/>
            <person name="Wan J."/>
        </authorList>
    </citation>
    <scope>FUNCTION</scope>
    <scope>DISRUPTION PHENOTYPE</scope>
</reference>
<name>DAO_ORYSJ</name>
<accession>Q7XKU5</accession>
<accession>A0A0P0WBR1</accession>
<protein>
    <recommendedName>
        <fullName>2-oxoglutarate-dependent dioxygenase DAO</fullName>
        <ecNumber>1.14.11.-</ecNumber>
    </recommendedName>
    <alternativeName>
        <fullName>Protein DIOXYGENASE FOR AUXIN OXIDATION</fullName>
    </alternativeName>
</protein>
<feature type="chain" id="PRO_0000424610" description="2-oxoglutarate-dependent dioxygenase DAO">
    <location>
        <begin position="1"/>
        <end position="300"/>
    </location>
</feature>
<feature type="domain" description="Fe2OG dioxygenase" evidence="1">
    <location>
        <begin position="149"/>
        <end position="252"/>
    </location>
</feature>
<feature type="binding site" evidence="1">
    <location>
        <position position="173"/>
    </location>
    <ligand>
        <name>Fe cation</name>
        <dbReference type="ChEBI" id="CHEBI:24875"/>
    </ligand>
</feature>
<feature type="binding site" evidence="1">
    <location>
        <position position="175"/>
    </location>
    <ligand>
        <name>Fe cation</name>
        <dbReference type="ChEBI" id="CHEBI:24875"/>
    </ligand>
</feature>
<feature type="binding site" evidence="1">
    <location>
        <position position="232"/>
    </location>
    <ligand>
        <name>Fe cation</name>
        <dbReference type="ChEBI" id="CHEBI:24875"/>
    </ligand>
</feature>
<feature type="binding site" evidence="1">
    <location>
        <position position="242"/>
    </location>
    <ligand>
        <name>2-oxoglutarate</name>
        <dbReference type="ChEBI" id="CHEBI:16810"/>
    </ligand>
</feature>
<comment type="function">
    <text evidence="2">2-oxoglutarate-dependent dioxygenase essential for auxin catabolism and maintenance of auxin homeostasis in reproductive organs. Catalyzes the irreversible oxidation of indole-3-acetic acid (IAA) to the biologically inactive 2-oxoindole-3-acetic acid (OxIAA).</text>
</comment>
<comment type="cofactor">
    <cofactor evidence="1">
        <name>Fe(2+)</name>
        <dbReference type="ChEBI" id="CHEBI:29033"/>
    </cofactor>
    <text evidence="1">Binds 1 Fe(2+) ion per subunit.</text>
</comment>
<comment type="disruption phenotype">
    <text evidence="2">Male sterility and production of parthenocarpic seeds. Increased levels of free IAA in anthers and ovaries.</text>
</comment>
<comment type="similarity">
    <text evidence="3">Belongs to the iron/ascorbate-dependent oxidoreductase family.</text>
</comment>